<accession>P0DH44</accession>
<accession>P67635</accession>
<accession>Q99ZK3</accession>
<dbReference type="EMBL" id="AE014074">
    <property type="protein sequence ID" value="AAM79446.1"/>
    <property type="molecule type" value="Genomic_DNA"/>
</dbReference>
<dbReference type="RefSeq" id="WP_002984598.1">
    <property type="nucleotide sequence ID" value="NC_004070.1"/>
</dbReference>
<dbReference type="SMR" id="P0DH44"/>
<dbReference type="GeneID" id="69900832"/>
<dbReference type="KEGG" id="spg:SpyM3_0839"/>
<dbReference type="HOGENOM" id="CLU_027562_9_6_9"/>
<dbReference type="Proteomes" id="UP000000564">
    <property type="component" value="Chromosome"/>
</dbReference>
<dbReference type="GO" id="GO:0005737">
    <property type="term" value="C:cytoplasm"/>
    <property type="evidence" value="ECO:0007669"/>
    <property type="project" value="UniProtKB-SubCell"/>
</dbReference>
<dbReference type="GO" id="GO:0003677">
    <property type="term" value="F:DNA binding"/>
    <property type="evidence" value="ECO:0007669"/>
    <property type="project" value="UniProtKB-KW"/>
</dbReference>
<dbReference type="GO" id="GO:0009037">
    <property type="term" value="F:tyrosine-based site-specific recombinase activity"/>
    <property type="evidence" value="ECO:0007669"/>
    <property type="project" value="UniProtKB-UniRule"/>
</dbReference>
<dbReference type="GO" id="GO:0051301">
    <property type="term" value="P:cell division"/>
    <property type="evidence" value="ECO:0007669"/>
    <property type="project" value="UniProtKB-KW"/>
</dbReference>
<dbReference type="GO" id="GO:0007059">
    <property type="term" value="P:chromosome segregation"/>
    <property type="evidence" value="ECO:0007669"/>
    <property type="project" value="UniProtKB-UniRule"/>
</dbReference>
<dbReference type="GO" id="GO:0006310">
    <property type="term" value="P:DNA recombination"/>
    <property type="evidence" value="ECO:0007669"/>
    <property type="project" value="UniProtKB-UniRule"/>
</dbReference>
<dbReference type="CDD" id="cd00397">
    <property type="entry name" value="DNA_BRE_C"/>
    <property type="match status" value="1"/>
</dbReference>
<dbReference type="Gene3D" id="1.10.150.130">
    <property type="match status" value="1"/>
</dbReference>
<dbReference type="Gene3D" id="1.10.443.10">
    <property type="entry name" value="Intergrase catalytic core"/>
    <property type="match status" value="1"/>
</dbReference>
<dbReference type="HAMAP" id="MF_01816">
    <property type="entry name" value="Recomb_XerS"/>
    <property type="match status" value="1"/>
</dbReference>
<dbReference type="InterPro" id="IPR044068">
    <property type="entry name" value="CB"/>
</dbReference>
<dbReference type="InterPro" id="IPR011010">
    <property type="entry name" value="DNA_brk_join_enz"/>
</dbReference>
<dbReference type="InterPro" id="IPR013762">
    <property type="entry name" value="Integrase-like_cat_sf"/>
</dbReference>
<dbReference type="InterPro" id="IPR002104">
    <property type="entry name" value="Integrase_catalytic"/>
</dbReference>
<dbReference type="InterPro" id="IPR010998">
    <property type="entry name" value="Integrase_recombinase_N"/>
</dbReference>
<dbReference type="InterPro" id="IPR004107">
    <property type="entry name" value="Integrase_SAM-like_N"/>
</dbReference>
<dbReference type="InterPro" id="IPR023670">
    <property type="entry name" value="Recomb_XerS"/>
</dbReference>
<dbReference type="InterPro" id="IPR050090">
    <property type="entry name" value="Tyrosine_recombinase_XerCD"/>
</dbReference>
<dbReference type="NCBIfam" id="NF003462">
    <property type="entry name" value="PRK05084.1"/>
    <property type="match status" value="1"/>
</dbReference>
<dbReference type="PANTHER" id="PTHR30349">
    <property type="entry name" value="PHAGE INTEGRASE-RELATED"/>
    <property type="match status" value="1"/>
</dbReference>
<dbReference type="PANTHER" id="PTHR30349:SF77">
    <property type="entry name" value="TYROSINE RECOMBINASE XERC"/>
    <property type="match status" value="1"/>
</dbReference>
<dbReference type="Pfam" id="PF02899">
    <property type="entry name" value="Phage_int_SAM_1"/>
    <property type="match status" value="1"/>
</dbReference>
<dbReference type="Pfam" id="PF00589">
    <property type="entry name" value="Phage_integrase"/>
    <property type="match status" value="1"/>
</dbReference>
<dbReference type="SUPFAM" id="SSF56349">
    <property type="entry name" value="DNA breaking-rejoining enzymes"/>
    <property type="match status" value="1"/>
</dbReference>
<dbReference type="PROSITE" id="PS51900">
    <property type="entry name" value="CB"/>
    <property type="match status" value="1"/>
</dbReference>
<dbReference type="PROSITE" id="PS51898">
    <property type="entry name" value="TYR_RECOMBINASE"/>
    <property type="match status" value="1"/>
</dbReference>
<proteinExistence type="inferred from homology"/>
<gene>
    <name evidence="1" type="primary">xerS</name>
    <name type="ordered locus">SpyM3_0839</name>
</gene>
<feature type="chain" id="PRO_0000095366" description="Tyrosine recombinase XerS">
    <location>
        <begin position="1"/>
        <end position="356"/>
    </location>
</feature>
<feature type="domain" description="Core-binding (CB)" evidence="3">
    <location>
        <begin position="16"/>
        <end position="121"/>
    </location>
</feature>
<feature type="domain" description="Tyr recombinase" evidence="2">
    <location>
        <begin position="169"/>
        <end position="354"/>
    </location>
</feature>
<feature type="active site" evidence="1">
    <location>
        <position position="210"/>
    </location>
</feature>
<feature type="active site" evidence="1">
    <location>
        <position position="234"/>
    </location>
</feature>
<feature type="active site" evidence="1">
    <location>
        <position position="306"/>
    </location>
</feature>
<feature type="active site" evidence="1">
    <location>
        <position position="309"/>
    </location>
</feature>
<feature type="active site" evidence="1">
    <location>
        <position position="332"/>
    </location>
</feature>
<feature type="active site" description="O-(3'-phospho-DNA)-tyrosine intermediate" evidence="1">
    <location>
        <position position="341"/>
    </location>
</feature>
<comment type="function">
    <text evidence="1">Site-specific tyrosine recombinase, which acts by catalyzing the cutting and rejoining of the recombining DNA molecules. Essential to convert dimers of the bacterial chromosome into monomers to permit their segregation at cell division.</text>
</comment>
<comment type="activity regulation">
    <text evidence="1">FtsK is required for recombination.</text>
</comment>
<comment type="subcellular location">
    <subcellularLocation>
        <location evidence="1">Cytoplasm</location>
    </subcellularLocation>
</comment>
<comment type="similarity">
    <text evidence="1">Belongs to the 'phage' integrase family. XerS subfamily.</text>
</comment>
<protein>
    <recommendedName>
        <fullName evidence="1">Tyrosine recombinase XerS</fullName>
    </recommendedName>
</protein>
<evidence type="ECO:0000255" key="1">
    <source>
        <dbReference type="HAMAP-Rule" id="MF_01816"/>
    </source>
</evidence>
<evidence type="ECO:0000255" key="2">
    <source>
        <dbReference type="PROSITE-ProRule" id="PRU01246"/>
    </source>
</evidence>
<evidence type="ECO:0000255" key="3">
    <source>
        <dbReference type="PROSITE-ProRule" id="PRU01248"/>
    </source>
</evidence>
<name>XERS_STRP3</name>
<keyword id="KW-0131">Cell cycle</keyword>
<keyword id="KW-0132">Cell division</keyword>
<keyword id="KW-0159">Chromosome partition</keyword>
<keyword id="KW-0963">Cytoplasm</keyword>
<keyword id="KW-0229">DNA integration</keyword>
<keyword id="KW-0233">DNA recombination</keyword>
<keyword id="KW-0238">DNA-binding</keyword>
<reference key="1">
    <citation type="journal article" date="2002" name="Proc. Natl. Acad. Sci. U.S.A.">
        <title>Genome sequence of a serotype M3 strain of group A Streptococcus: phage-encoded toxins, the high-virulence phenotype, and clone emergence.</title>
        <authorList>
            <person name="Beres S.B."/>
            <person name="Sylva G.L."/>
            <person name="Barbian K.D."/>
            <person name="Lei B."/>
            <person name="Hoff J.S."/>
            <person name="Mammarella N.D."/>
            <person name="Liu M.-Y."/>
            <person name="Smoot J.C."/>
            <person name="Porcella S.F."/>
            <person name="Parkins L.D."/>
            <person name="Campbell D.S."/>
            <person name="Smith T.M."/>
            <person name="McCormick J.K."/>
            <person name="Leung D.Y.M."/>
            <person name="Schlievert P.M."/>
            <person name="Musser J.M."/>
        </authorList>
    </citation>
    <scope>NUCLEOTIDE SEQUENCE [LARGE SCALE GENOMIC DNA]</scope>
    <source>
        <strain>ATCC BAA-595 / MGAS315</strain>
    </source>
</reference>
<organism>
    <name type="scientific">Streptococcus pyogenes serotype M3 (strain ATCC BAA-595 / MGAS315)</name>
    <dbReference type="NCBI Taxonomy" id="198466"/>
    <lineage>
        <taxon>Bacteria</taxon>
        <taxon>Bacillati</taxon>
        <taxon>Bacillota</taxon>
        <taxon>Bacilli</taxon>
        <taxon>Lactobacillales</taxon>
        <taxon>Streptococcaceae</taxon>
        <taxon>Streptococcus</taxon>
    </lineage>
</organism>
<sequence length="356" mass="41472">MRRELLLEKIETYKAIMPWYVLDYYQSKLAVPYSFTTLYEYLKEYKRFFDWLMDADLTQAPKIADIDLSTLEHLTKKDLEAFVLYLRERPSLNTYSTKEGLSQTTINRTLSALSSLYKYLTEEVENDQGEPYFYRNVMKKVSTKKKKETLASRAENIKQKLFLGDETLAFLDYVDKEYEQKLSNRAKSSFRKNKERDLAIIALLLASGVRLSEAVNLDLKDVNLNMMIIEVIRKGGKRDSVNVAGFAKGYLESYLAVRQRRYKAEKQDLAFFLTEYRGVPNRMDASSIEKMVGKYSEDFKIRVTPHKLRHTLATRLYDATKSQVLVSHQLGHSSTQVTDLYTHIVNDEQKNALDNL</sequence>